<accession>A6VF31</accession>
<proteinExistence type="inferred from homology"/>
<feature type="chain" id="PRO_1000060982" description="ATP synthase epsilon chain">
    <location>
        <begin position="1"/>
        <end position="141"/>
    </location>
</feature>
<gene>
    <name evidence="1" type="primary">atpC</name>
    <name type="ordered locus">PSPA7_6355</name>
</gene>
<organism>
    <name type="scientific">Pseudomonas paraeruginosa (strain DSM 24068 / PA7)</name>
    <name type="common">Pseudomonas aeruginosa (strain PA7)</name>
    <dbReference type="NCBI Taxonomy" id="381754"/>
    <lineage>
        <taxon>Bacteria</taxon>
        <taxon>Pseudomonadati</taxon>
        <taxon>Pseudomonadota</taxon>
        <taxon>Gammaproteobacteria</taxon>
        <taxon>Pseudomonadales</taxon>
        <taxon>Pseudomonadaceae</taxon>
        <taxon>Pseudomonas</taxon>
        <taxon>Pseudomonas paraeruginosa</taxon>
    </lineage>
</organism>
<evidence type="ECO:0000255" key="1">
    <source>
        <dbReference type="HAMAP-Rule" id="MF_00530"/>
    </source>
</evidence>
<comment type="function">
    <text evidence="1">Produces ATP from ADP in the presence of a proton gradient across the membrane.</text>
</comment>
<comment type="subunit">
    <text evidence="1">F-type ATPases have 2 components, CF(1) - the catalytic core - and CF(0) - the membrane proton channel. CF(1) has five subunits: alpha(3), beta(3), gamma(1), delta(1), epsilon(1). CF(0) has three main subunits: a, b and c.</text>
</comment>
<comment type="subcellular location">
    <subcellularLocation>
        <location evidence="1">Cell inner membrane</location>
        <topology evidence="1">Peripheral membrane protein</topology>
    </subcellularLocation>
</comment>
<comment type="similarity">
    <text evidence="1">Belongs to the ATPase epsilon chain family.</text>
</comment>
<reference key="1">
    <citation type="submission" date="2007-06" db="EMBL/GenBank/DDBJ databases">
        <authorList>
            <person name="Dodson R.J."/>
            <person name="Harkins D."/>
            <person name="Paulsen I.T."/>
        </authorList>
    </citation>
    <scope>NUCLEOTIDE SEQUENCE [LARGE SCALE GENOMIC DNA]</scope>
    <source>
        <strain>DSM 24068 / PA7</strain>
    </source>
</reference>
<dbReference type="EMBL" id="CP000744">
    <property type="protein sequence ID" value="ABR85340.1"/>
    <property type="molecule type" value="Genomic_DNA"/>
</dbReference>
<dbReference type="RefSeq" id="WP_003097128.1">
    <property type="nucleotide sequence ID" value="NC_009656.1"/>
</dbReference>
<dbReference type="SMR" id="A6VF31"/>
<dbReference type="KEGG" id="pap:PSPA7_6355"/>
<dbReference type="HOGENOM" id="CLU_084338_2_0_6"/>
<dbReference type="Proteomes" id="UP000001582">
    <property type="component" value="Chromosome"/>
</dbReference>
<dbReference type="GO" id="GO:0005886">
    <property type="term" value="C:plasma membrane"/>
    <property type="evidence" value="ECO:0007669"/>
    <property type="project" value="UniProtKB-SubCell"/>
</dbReference>
<dbReference type="GO" id="GO:0045259">
    <property type="term" value="C:proton-transporting ATP synthase complex"/>
    <property type="evidence" value="ECO:0007669"/>
    <property type="project" value="UniProtKB-KW"/>
</dbReference>
<dbReference type="GO" id="GO:0005524">
    <property type="term" value="F:ATP binding"/>
    <property type="evidence" value="ECO:0007669"/>
    <property type="project" value="UniProtKB-UniRule"/>
</dbReference>
<dbReference type="GO" id="GO:0046933">
    <property type="term" value="F:proton-transporting ATP synthase activity, rotational mechanism"/>
    <property type="evidence" value="ECO:0007669"/>
    <property type="project" value="UniProtKB-UniRule"/>
</dbReference>
<dbReference type="CDD" id="cd12152">
    <property type="entry name" value="F1-ATPase_delta"/>
    <property type="match status" value="1"/>
</dbReference>
<dbReference type="FunFam" id="2.60.15.10:FF:000001">
    <property type="entry name" value="ATP synthase epsilon chain"/>
    <property type="match status" value="1"/>
</dbReference>
<dbReference type="Gene3D" id="1.20.5.440">
    <property type="entry name" value="ATP synthase delta/epsilon subunit, C-terminal domain"/>
    <property type="match status" value="1"/>
</dbReference>
<dbReference type="Gene3D" id="2.60.15.10">
    <property type="entry name" value="F0F1 ATP synthase delta/epsilon subunit, N-terminal"/>
    <property type="match status" value="1"/>
</dbReference>
<dbReference type="HAMAP" id="MF_00530">
    <property type="entry name" value="ATP_synth_epsil_bac"/>
    <property type="match status" value="1"/>
</dbReference>
<dbReference type="InterPro" id="IPR036794">
    <property type="entry name" value="ATP_F1_dsu/esu_C_sf"/>
</dbReference>
<dbReference type="InterPro" id="IPR001469">
    <property type="entry name" value="ATP_synth_F1_dsu/esu"/>
</dbReference>
<dbReference type="InterPro" id="IPR020546">
    <property type="entry name" value="ATP_synth_F1_dsu/esu_N"/>
</dbReference>
<dbReference type="InterPro" id="IPR020547">
    <property type="entry name" value="ATP_synth_F1_esu_C"/>
</dbReference>
<dbReference type="InterPro" id="IPR036771">
    <property type="entry name" value="ATPsynth_dsu/esu_N"/>
</dbReference>
<dbReference type="NCBIfam" id="TIGR01216">
    <property type="entry name" value="ATP_synt_epsi"/>
    <property type="match status" value="1"/>
</dbReference>
<dbReference type="NCBIfam" id="NF001847">
    <property type="entry name" value="PRK00571.1-4"/>
    <property type="match status" value="1"/>
</dbReference>
<dbReference type="PANTHER" id="PTHR13822">
    <property type="entry name" value="ATP SYNTHASE DELTA/EPSILON CHAIN"/>
    <property type="match status" value="1"/>
</dbReference>
<dbReference type="PANTHER" id="PTHR13822:SF10">
    <property type="entry name" value="ATP SYNTHASE EPSILON CHAIN, CHLOROPLASTIC"/>
    <property type="match status" value="1"/>
</dbReference>
<dbReference type="Pfam" id="PF00401">
    <property type="entry name" value="ATP-synt_DE"/>
    <property type="match status" value="1"/>
</dbReference>
<dbReference type="Pfam" id="PF02823">
    <property type="entry name" value="ATP-synt_DE_N"/>
    <property type="match status" value="1"/>
</dbReference>
<dbReference type="SUPFAM" id="SSF46604">
    <property type="entry name" value="Epsilon subunit of F1F0-ATP synthase C-terminal domain"/>
    <property type="match status" value="1"/>
</dbReference>
<dbReference type="SUPFAM" id="SSF51344">
    <property type="entry name" value="Epsilon subunit of F1F0-ATP synthase N-terminal domain"/>
    <property type="match status" value="1"/>
</dbReference>
<name>ATPE_PSEP7</name>
<sequence>MAITVHCDIVSAEAEIFSGLVEMVIAHGALGDLGIAPGHAPLITDLKPGPIRLVKQGGEQEVYYISGGFLEVQPNMVKVLADTVVRAGDLDEAAAQEALKAAEKALQGKGAEFDYSAAAARLAEAAAQLRTVQQLRKKFGG</sequence>
<keyword id="KW-0066">ATP synthesis</keyword>
<keyword id="KW-0997">Cell inner membrane</keyword>
<keyword id="KW-1003">Cell membrane</keyword>
<keyword id="KW-0139">CF(1)</keyword>
<keyword id="KW-0375">Hydrogen ion transport</keyword>
<keyword id="KW-0406">Ion transport</keyword>
<keyword id="KW-0472">Membrane</keyword>
<keyword id="KW-0813">Transport</keyword>
<protein>
    <recommendedName>
        <fullName evidence="1">ATP synthase epsilon chain</fullName>
    </recommendedName>
    <alternativeName>
        <fullName evidence="1">ATP synthase F1 sector epsilon subunit</fullName>
    </alternativeName>
    <alternativeName>
        <fullName evidence="1">F-ATPase epsilon subunit</fullName>
    </alternativeName>
</protein>